<proteinExistence type="inferred from homology"/>
<evidence type="ECO:0000255" key="1">
    <source>
        <dbReference type="HAMAP-Rule" id="MF_00086"/>
    </source>
</evidence>
<dbReference type="EC" id="2.5.1.6" evidence="1"/>
<dbReference type="EMBL" id="AP009552">
    <property type="protein sequence ID" value="BAG04419.1"/>
    <property type="molecule type" value="Genomic_DNA"/>
</dbReference>
<dbReference type="RefSeq" id="WP_012267167.1">
    <property type="nucleotide sequence ID" value="NC_010296.1"/>
</dbReference>
<dbReference type="SMR" id="B0JUH1"/>
<dbReference type="STRING" id="449447.MAE_45970"/>
<dbReference type="PaxDb" id="449447-MAE_45970"/>
<dbReference type="EnsemblBacteria" id="BAG04419">
    <property type="protein sequence ID" value="BAG04419"/>
    <property type="gene ID" value="MAE_45970"/>
</dbReference>
<dbReference type="GeneID" id="66705621"/>
<dbReference type="KEGG" id="mar:MAE_45970"/>
<dbReference type="eggNOG" id="COG0192">
    <property type="taxonomic scope" value="Bacteria"/>
</dbReference>
<dbReference type="HOGENOM" id="CLU_041802_1_1_3"/>
<dbReference type="BioCyc" id="MAER449447:MAE_RS19940-MONOMER"/>
<dbReference type="UniPathway" id="UPA00315">
    <property type="reaction ID" value="UER00080"/>
</dbReference>
<dbReference type="Proteomes" id="UP000001510">
    <property type="component" value="Chromosome"/>
</dbReference>
<dbReference type="GO" id="GO:0005737">
    <property type="term" value="C:cytoplasm"/>
    <property type="evidence" value="ECO:0007669"/>
    <property type="project" value="UniProtKB-SubCell"/>
</dbReference>
<dbReference type="GO" id="GO:0005524">
    <property type="term" value="F:ATP binding"/>
    <property type="evidence" value="ECO:0007669"/>
    <property type="project" value="UniProtKB-UniRule"/>
</dbReference>
<dbReference type="GO" id="GO:0000287">
    <property type="term" value="F:magnesium ion binding"/>
    <property type="evidence" value="ECO:0007669"/>
    <property type="project" value="UniProtKB-UniRule"/>
</dbReference>
<dbReference type="GO" id="GO:0004478">
    <property type="term" value="F:methionine adenosyltransferase activity"/>
    <property type="evidence" value="ECO:0007669"/>
    <property type="project" value="UniProtKB-UniRule"/>
</dbReference>
<dbReference type="GO" id="GO:0006730">
    <property type="term" value="P:one-carbon metabolic process"/>
    <property type="evidence" value="ECO:0007669"/>
    <property type="project" value="UniProtKB-KW"/>
</dbReference>
<dbReference type="GO" id="GO:0006556">
    <property type="term" value="P:S-adenosylmethionine biosynthetic process"/>
    <property type="evidence" value="ECO:0007669"/>
    <property type="project" value="UniProtKB-UniRule"/>
</dbReference>
<dbReference type="CDD" id="cd18079">
    <property type="entry name" value="S-AdoMet_synt"/>
    <property type="match status" value="1"/>
</dbReference>
<dbReference type="FunFam" id="3.30.300.10:FF:000003">
    <property type="entry name" value="S-adenosylmethionine synthase"/>
    <property type="match status" value="1"/>
</dbReference>
<dbReference type="Gene3D" id="3.30.300.10">
    <property type="match status" value="3"/>
</dbReference>
<dbReference type="HAMAP" id="MF_00086">
    <property type="entry name" value="S_AdoMet_synth1"/>
    <property type="match status" value="1"/>
</dbReference>
<dbReference type="InterPro" id="IPR022631">
    <property type="entry name" value="ADOMET_SYNTHASE_CS"/>
</dbReference>
<dbReference type="InterPro" id="IPR022630">
    <property type="entry name" value="S-AdoMet_synt_C"/>
</dbReference>
<dbReference type="InterPro" id="IPR022629">
    <property type="entry name" value="S-AdoMet_synt_central"/>
</dbReference>
<dbReference type="InterPro" id="IPR022628">
    <property type="entry name" value="S-AdoMet_synt_N"/>
</dbReference>
<dbReference type="InterPro" id="IPR002133">
    <property type="entry name" value="S-AdoMet_synthetase"/>
</dbReference>
<dbReference type="InterPro" id="IPR022636">
    <property type="entry name" value="S-AdoMet_synthetase_sfam"/>
</dbReference>
<dbReference type="NCBIfam" id="TIGR01034">
    <property type="entry name" value="metK"/>
    <property type="match status" value="1"/>
</dbReference>
<dbReference type="PANTHER" id="PTHR11964">
    <property type="entry name" value="S-ADENOSYLMETHIONINE SYNTHETASE"/>
    <property type="match status" value="1"/>
</dbReference>
<dbReference type="Pfam" id="PF02773">
    <property type="entry name" value="S-AdoMet_synt_C"/>
    <property type="match status" value="1"/>
</dbReference>
<dbReference type="Pfam" id="PF02772">
    <property type="entry name" value="S-AdoMet_synt_M"/>
    <property type="match status" value="1"/>
</dbReference>
<dbReference type="Pfam" id="PF00438">
    <property type="entry name" value="S-AdoMet_synt_N"/>
    <property type="match status" value="1"/>
</dbReference>
<dbReference type="PIRSF" id="PIRSF000497">
    <property type="entry name" value="MAT"/>
    <property type="match status" value="1"/>
</dbReference>
<dbReference type="SUPFAM" id="SSF55973">
    <property type="entry name" value="S-adenosylmethionine synthetase"/>
    <property type="match status" value="3"/>
</dbReference>
<dbReference type="PROSITE" id="PS00376">
    <property type="entry name" value="ADOMET_SYNTHASE_1"/>
    <property type="match status" value="1"/>
</dbReference>
<dbReference type="PROSITE" id="PS00377">
    <property type="entry name" value="ADOMET_SYNTHASE_2"/>
    <property type="match status" value="1"/>
</dbReference>
<sequence>MSKRYLFTSESVTEGHPDKICDQISDTILDALLSQDDHSRVAAEVVVNTGLVLITGEITSKAQVHFVDLVRKKIAEIGYINADNGFSSNSCTVLVALDEQSPDISQGVTAAQENRELLSNDELDKIGAGDQGIVFGFACNETPEFMPLPISLAHRIARRLAAVRKTGELSYLRPDGKTQVSVIYEDGRPVGIDTILVSTQHDATIGDITDNDLVQQKIKSDLWEAVVQPVFSDLEIKPDANTRYLVNPTGKFVIGGPQGDAGLTGRKIIVDTYGGYSRHGGGAFSGKDPTKVDRSAAYACRYVAKNIVAAGLADKCEIQVGYAIGVARPVSLFVETFGTGKVADDVILDLINKYFELRPAGIIQTFNLRGLPSERGERFYQDVAAYGHFGRNDLDLPWEQTDKAAILKEALTSAVV</sequence>
<protein>
    <recommendedName>
        <fullName evidence="1">S-adenosylmethionine synthase</fullName>
        <shortName evidence="1">AdoMet synthase</shortName>
        <ecNumber evidence="1">2.5.1.6</ecNumber>
    </recommendedName>
    <alternativeName>
        <fullName evidence="1">MAT</fullName>
    </alternativeName>
    <alternativeName>
        <fullName evidence="1">Methionine adenosyltransferase</fullName>
    </alternativeName>
</protein>
<gene>
    <name evidence="1" type="primary">metK</name>
    <name type="ordered locus">MAE_45970</name>
</gene>
<accession>B0JUH1</accession>
<organism>
    <name type="scientific">Microcystis aeruginosa (strain NIES-843 / IAM M-2473)</name>
    <dbReference type="NCBI Taxonomy" id="449447"/>
    <lineage>
        <taxon>Bacteria</taxon>
        <taxon>Bacillati</taxon>
        <taxon>Cyanobacteriota</taxon>
        <taxon>Cyanophyceae</taxon>
        <taxon>Oscillatoriophycideae</taxon>
        <taxon>Chroococcales</taxon>
        <taxon>Microcystaceae</taxon>
        <taxon>Microcystis</taxon>
    </lineage>
</organism>
<name>METK_MICAN</name>
<comment type="function">
    <text evidence="1">Catalyzes the formation of S-adenosylmethionine (AdoMet) from methionine and ATP. The overall synthetic reaction is composed of two sequential steps, AdoMet formation and the subsequent tripolyphosphate hydrolysis which occurs prior to release of AdoMet from the enzyme.</text>
</comment>
<comment type="catalytic activity">
    <reaction evidence="1">
        <text>L-methionine + ATP + H2O = S-adenosyl-L-methionine + phosphate + diphosphate</text>
        <dbReference type="Rhea" id="RHEA:21080"/>
        <dbReference type="ChEBI" id="CHEBI:15377"/>
        <dbReference type="ChEBI" id="CHEBI:30616"/>
        <dbReference type="ChEBI" id="CHEBI:33019"/>
        <dbReference type="ChEBI" id="CHEBI:43474"/>
        <dbReference type="ChEBI" id="CHEBI:57844"/>
        <dbReference type="ChEBI" id="CHEBI:59789"/>
        <dbReference type="EC" id="2.5.1.6"/>
    </reaction>
</comment>
<comment type="cofactor">
    <cofactor evidence="1">
        <name>Mg(2+)</name>
        <dbReference type="ChEBI" id="CHEBI:18420"/>
    </cofactor>
    <text evidence="1">Binds 2 divalent ions per subunit.</text>
</comment>
<comment type="cofactor">
    <cofactor evidence="1">
        <name>K(+)</name>
        <dbReference type="ChEBI" id="CHEBI:29103"/>
    </cofactor>
    <text evidence="1">Binds 1 potassium ion per subunit.</text>
</comment>
<comment type="pathway">
    <text evidence="1">Amino-acid biosynthesis; S-adenosyl-L-methionine biosynthesis; S-adenosyl-L-methionine from L-methionine: step 1/1.</text>
</comment>
<comment type="subunit">
    <text evidence="1">Homotetramer; dimer of dimers.</text>
</comment>
<comment type="subcellular location">
    <subcellularLocation>
        <location evidence="1">Cytoplasm</location>
    </subcellularLocation>
</comment>
<comment type="similarity">
    <text evidence="1">Belongs to the AdoMet synthase family.</text>
</comment>
<feature type="chain" id="PRO_1000075381" description="S-adenosylmethionine synthase">
    <location>
        <begin position="1"/>
        <end position="416"/>
    </location>
</feature>
<feature type="region of interest" description="Flexible loop" evidence="1">
    <location>
        <begin position="100"/>
        <end position="110"/>
    </location>
</feature>
<feature type="binding site" description="in other chain" evidence="1">
    <location>
        <position position="16"/>
    </location>
    <ligand>
        <name>ATP</name>
        <dbReference type="ChEBI" id="CHEBI:30616"/>
        <note>ligand shared between two neighboring subunits</note>
    </ligand>
</feature>
<feature type="binding site" evidence="1">
    <location>
        <position position="18"/>
    </location>
    <ligand>
        <name>Mg(2+)</name>
        <dbReference type="ChEBI" id="CHEBI:18420"/>
    </ligand>
</feature>
<feature type="binding site" evidence="1">
    <location>
        <position position="44"/>
    </location>
    <ligand>
        <name>K(+)</name>
        <dbReference type="ChEBI" id="CHEBI:29103"/>
    </ligand>
</feature>
<feature type="binding site" description="in other chain" evidence="1">
    <location>
        <position position="57"/>
    </location>
    <ligand>
        <name>L-methionine</name>
        <dbReference type="ChEBI" id="CHEBI:57844"/>
        <note>ligand shared between two neighboring subunits</note>
    </ligand>
</feature>
<feature type="binding site" description="in other chain" evidence="1">
    <location>
        <position position="100"/>
    </location>
    <ligand>
        <name>L-methionine</name>
        <dbReference type="ChEBI" id="CHEBI:57844"/>
        <note>ligand shared between two neighboring subunits</note>
    </ligand>
</feature>
<feature type="binding site" description="in other chain" evidence="1">
    <location>
        <begin position="175"/>
        <end position="177"/>
    </location>
    <ligand>
        <name>ATP</name>
        <dbReference type="ChEBI" id="CHEBI:30616"/>
        <note>ligand shared between two neighboring subunits</note>
    </ligand>
</feature>
<feature type="binding site" description="in other chain" evidence="1">
    <location>
        <begin position="251"/>
        <end position="252"/>
    </location>
    <ligand>
        <name>ATP</name>
        <dbReference type="ChEBI" id="CHEBI:30616"/>
        <note>ligand shared between two neighboring subunits</note>
    </ligand>
</feature>
<feature type="binding site" evidence="1">
    <location>
        <position position="260"/>
    </location>
    <ligand>
        <name>ATP</name>
        <dbReference type="ChEBI" id="CHEBI:30616"/>
        <note>ligand shared between two neighboring subunits</note>
    </ligand>
</feature>
<feature type="binding site" evidence="1">
    <location>
        <position position="260"/>
    </location>
    <ligand>
        <name>L-methionine</name>
        <dbReference type="ChEBI" id="CHEBI:57844"/>
        <note>ligand shared between two neighboring subunits</note>
    </ligand>
</feature>
<feature type="binding site" description="in other chain" evidence="1">
    <location>
        <begin position="266"/>
        <end position="267"/>
    </location>
    <ligand>
        <name>ATP</name>
        <dbReference type="ChEBI" id="CHEBI:30616"/>
        <note>ligand shared between two neighboring subunits</note>
    </ligand>
</feature>
<feature type="binding site" evidence="1">
    <location>
        <position position="283"/>
    </location>
    <ligand>
        <name>ATP</name>
        <dbReference type="ChEBI" id="CHEBI:30616"/>
        <note>ligand shared between two neighboring subunits</note>
    </ligand>
</feature>
<feature type="binding site" evidence="1">
    <location>
        <position position="287"/>
    </location>
    <ligand>
        <name>ATP</name>
        <dbReference type="ChEBI" id="CHEBI:30616"/>
        <note>ligand shared between two neighboring subunits</note>
    </ligand>
</feature>
<feature type="binding site" description="in other chain" evidence="1">
    <location>
        <position position="291"/>
    </location>
    <ligand>
        <name>L-methionine</name>
        <dbReference type="ChEBI" id="CHEBI:57844"/>
        <note>ligand shared between two neighboring subunits</note>
    </ligand>
</feature>
<reference key="1">
    <citation type="journal article" date="2007" name="DNA Res.">
        <title>Complete genomic structure of the bloom-forming toxic cyanobacterium Microcystis aeruginosa NIES-843.</title>
        <authorList>
            <person name="Kaneko T."/>
            <person name="Nakajima N."/>
            <person name="Okamoto S."/>
            <person name="Suzuki I."/>
            <person name="Tanabe Y."/>
            <person name="Tamaoki M."/>
            <person name="Nakamura Y."/>
            <person name="Kasai F."/>
            <person name="Watanabe A."/>
            <person name="Kawashima K."/>
            <person name="Kishida Y."/>
            <person name="Ono A."/>
            <person name="Shimizu Y."/>
            <person name="Takahashi C."/>
            <person name="Minami C."/>
            <person name="Fujishiro T."/>
            <person name="Kohara M."/>
            <person name="Katoh M."/>
            <person name="Nakazaki N."/>
            <person name="Nakayama S."/>
            <person name="Yamada M."/>
            <person name="Tabata S."/>
            <person name="Watanabe M.M."/>
        </authorList>
    </citation>
    <scope>NUCLEOTIDE SEQUENCE [LARGE SCALE GENOMIC DNA]</scope>
    <source>
        <strain>NIES-843 / IAM M-247</strain>
    </source>
</reference>
<keyword id="KW-0067">ATP-binding</keyword>
<keyword id="KW-0963">Cytoplasm</keyword>
<keyword id="KW-0460">Magnesium</keyword>
<keyword id="KW-0479">Metal-binding</keyword>
<keyword id="KW-0547">Nucleotide-binding</keyword>
<keyword id="KW-0554">One-carbon metabolism</keyword>
<keyword id="KW-0630">Potassium</keyword>
<keyword id="KW-0808">Transferase</keyword>